<organism>
    <name type="scientific">Arabidopsis thaliana</name>
    <name type="common">Mouse-ear cress</name>
    <dbReference type="NCBI Taxonomy" id="3702"/>
    <lineage>
        <taxon>Eukaryota</taxon>
        <taxon>Viridiplantae</taxon>
        <taxon>Streptophyta</taxon>
        <taxon>Embryophyta</taxon>
        <taxon>Tracheophyta</taxon>
        <taxon>Spermatophyta</taxon>
        <taxon>Magnoliopsida</taxon>
        <taxon>eudicotyledons</taxon>
        <taxon>Gunneridae</taxon>
        <taxon>Pentapetalae</taxon>
        <taxon>rosids</taxon>
        <taxon>malvids</taxon>
        <taxon>Brassicales</taxon>
        <taxon>Brassicaceae</taxon>
        <taxon>Camelineae</taxon>
        <taxon>Arabidopsis</taxon>
    </lineage>
</organism>
<accession>Q9FJ41</accession>
<accession>Q56ZU9</accession>
<sequence length="357" mass="39854">MLLVAFVTLLVAVALQPLPSVLSLDVHLLRQLAAKHNVTSILVFGDSSVDPGNNNFIKTEMKGNFPPYGENFINHKPTGRLCDGLLAPDYIAEAMGYPPIPAFLDPSLTQADLTRGASFASAGSGYDDLTANISNVWSFTTQANYFLHYKIHLTKLVGPLESAKMINNAIFLMSMGSNDFLQNYLVDFTRQKQFTVEQYIEFLSHRMLYDAKMLHRLGAKRLVVVGVPPMGCMPLIKYLRGQKTCVDQLNQIAFSFNAKIIKNLELLQSKIGLKTIYVDAYSTIQEAIKNPRKFGFVEASLGCCGTGTYEYGETCKDMQVCKDPTKYVFWDAVHPTQRMYQIIVKKAIASISEEFLV</sequence>
<feature type="signal peptide" evidence="2">
    <location>
        <begin position="1"/>
        <end position="23"/>
    </location>
</feature>
<feature type="chain" id="PRO_0000367425" description="GDSL esterase/lipase At5g45950">
    <location>
        <begin position="24"/>
        <end position="357"/>
    </location>
</feature>
<feature type="active site" description="Nucleophile" evidence="1">
    <location>
        <position position="47"/>
    </location>
</feature>
<feature type="active site" evidence="1">
    <location>
        <position position="331"/>
    </location>
</feature>
<feature type="active site" evidence="1">
    <location>
        <position position="334"/>
    </location>
</feature>
<feature type="glycosylation site" description="N-linked (GlcNAc...) asparagine" evidence="2">
    <location>
        <position position="37"/>
    </location>
</feature>
<feature type="glycosylation site" description="N-linked (GlcNAc...) asparagine" evidence="2">
    <location>
        <position position="132"/>
    </location>
</feature>
<proteinExistence type="evidence at transcript level"/>
<keyword id="KW-0325">Glycoprotein</keyword>
<keyword id="KW-0378">Hydrolase</keyword>
<keyword id="KW-0442">Lipid degradation</keyword>
<keyword id="KW-0443">Lipid metabolism</keyword>
<keyword id="KW-1185">Reference proteome</keyword>
<keyword id="KW-0964">Secreted</keyword>
<keyword id="KW-0732">Signal</keyword>
<comment type="subcellular location">
    <subcellularLocation>
        <location evidence="3">Secreted</location>
    </subcellularLocation>
</comment>
<comment type="similarity">
    <text evidence="3">Belongs to the 'GDSL' lipolytic enzyme family.</text>
</comment>
<protein>
    <recommendedName>
        <fullName>GDSL esterase/lipase At5g45950</fullName>
        <ecNumber>3.1.1.-</ecNumber>
    </recommendedName>
    <alternativeName>
        <fullName>Extracellular lipase At5g45950</fullName>
    </alternativeName>
</protein>
<reference key="1">
    <citation type="journal article" date="1998" name="DNA Res.">
        <title>Structural analysis of Arabidopsis thaliana chromosome 5. VIII. Sequence features of the regions of 1,081,958 bp covered by seventeen physically assigned P1 and TAC clones.</title>
        <authorList>
            <person name="Asamizu E."/>
            <person name="Sato S."/>
            <person name="Kaneko T."/>
            <person name="Nakamura Y."/>
            <person name="Kotani H."/>
            <person name="Miyajima N."/>
            <person name="Tabata S."/>
        </authorList>
    </citation>
    <scope>NUCLEOTIDE SEQUENCE [LARGE SCALE GENOMIC DNA]</scope>
    <source>
        <strain>cv. Columbia</strain>
    </source>
</reference>
<reference key="2">
    <citation type="journal article" date="2017" name="Plant J.">
        <title>Araport11: a complete reannotation of the Arabidopsis thaliana reference genome.</title>
        <authorList>
            <person name="Cheng C.Y."/>
            <person name="Krishnakumar V."/>
            <person name="Chan A.P."/>
            <person name="Thibaud-Nissen F."/>
            <person name="Schobel S."/>
            <person name="Town C.D."/>
        </authorList>
    </citation>
    <scope>GENOME REANNOTATION</scope>
    <source>
        <strain>cv. Columbia</strain>
    </source>
</reference>
<reference key="3">
    <citation type="submission" date="2005-03" db="EMBL/GenBank/DDBJ databases">
        <title>Large-scale analysis of RIKEN Arabidopsis full-length (RAFL) cDNAs.</title>
        <authorList>
            <person name="Totoki Y."/>
            <person name="Seki M."/>
            <person name="Ishida J."/>
            <person name="Nakajima M."/>
            <person name="Enju A."/>
            <person name="Kamiya A."/>
            <person name="Narusaka M."/>
            <person name="Shin-i T."/>
            <person name="Nakagawa M."/>
            <person name="Sakamoto N."/>
            <person name="Oishi K."/>
            <person name="Kohara Y."/>
            <person name="Kobayashi M."/>
            <person name="Toyoda A."/>
            <person name="Sakaki Y."/>
            <person name="Sakurai T."/>
            <person name="Iida K."/>
            <person name="Akiyama K."/>
            <person name="Satou M."/>
            <person name="Toyoda T."/>
            <person name="Konagaya A."/>
            <person name="Carninci P."/>
            <person name="Kawai J."/>
            <person name="Hayashizaki Y."/>
            <person name="Shinozaki K."/>
        </authorList>
    </citation>
    <scope>NUCLEOTIDE SEQUENCE [LARGE SCALE MRNA] OF 245-357</scope>
    <source>
        <strain>cv. Columbia</strain>
    </source>
</reference>
<reference key="4">
    <citation type="journal article" date="2004" name="Prog. Lipid Res.">
        <title>GDSL family of serine esterases/lipases.</title>
        <authorList>
            <person name="Akoh C.C."/>
            <person name="Lee G.-C."/>
            <person name="Liaw Y.-C."/>
            <person name="Huang T.-H."/>
            <person name="Shaw J.-F."/>
        </authorList>
    </citation>
    <scope>REVIEW</scope>
</reference>
<reference key="5">
    <citation type="journal article" date="2008" name="Pak. J. Biol. Sci.">
        <title>Sequence analysis of GDSL lipase gene family in Arabidopsis thaliana.</title>
        <authorList>
            <person name="Ling H."/>
        </authorList>
    </citation>
    <scope>GENE FAMILY</scope>
</reference>
<gene>
    <name type="ordered locus">At5g45950</name>
    <name type="ORF">K15I22.15</name>
</gene>
<dbReference type="EC" id="3.1.1.-"/>
<dbReference type="EMBL" id="AB016870">
    <property type="protein sequence ID" value="BAB09323.1"/>
    <property type="molecule type" value="Genomic_DNA"/>
</dbReference>
<dbReference type="EMBL" id="CP002688">
    <property type="protein sequence ID" value="AED95319.1"/>
    <property type="molecule type" value="Genomic_DNA"/>
</dbReference>
<dbReference type="EMBL" id="AK220862">
    <property type="protein sequence ID" value="BAD94226.1"/>
    <property type="molecule type" value="mRNA"/>
</dbReference>
<dbReference type="RefSeq" id="NP_199407.1">
    <property type="nucleotide sequence ID" value="NM_123963.4"/>
</dbReference>
<dbReference type="SMR" id="Q9FJ41"/>
<dbReference type="FunCoup" id="Q9FJ41">
    <property type="interactions" value="123"/>
</dbReference>
<dbReference type="STRING" id="3702.Q9FJ41"/>
<dbReference type="GlyGen" id="Q9FJ41">
    <property type="glycosylation" value="2 sites"/>
</dbReference>
<dbReference type="PaxDb" id="3702-AT5G45950.1"/>
<dbReference type="ProteomicsDB" id="247112"/>
<dbReference type="EnsemblPlants" id="AT5G45950.1">
    <property type="protein sequence ID" value="AT5G45950.1"/>
    <property type="gene ID" value="AT5G45950"/>
</dbReference>
<dbReference type="GeneID" id="834635"/>
<dbReference type="Gramene" id="AT5G45950.1">
    <property type="protein sequence ID" value="AT5G45950.1"/>
    <property type="gene ID" value="AT5G45950"/>
</dbReference>
<dbReference type="KEGG" id="ath:AT5G45950"/>
<dbReference type="Araport" id="AT5G45950"/>
<dbReference type="TAIR" id="AT5G45950"/>
<dbReference type="eggNOG" id="ENOG502R619">
    <property type="taxonomic scope" value="Eukaryota"/>
</dbReference>
<dbReference type="HOGENOM" id="CLU_015101_0_1_1"/>
<dbReference type="InParanoid" id="Q9FJ41"/>
<dbReference type="OMA" id="MKGNFPP"/>
<dbReference type="PhylomeDB" id="Q9FJ41"/>
<dbReference type="BioCyc" id="ARA:AT5G45950-MONOMER"/>
<dbReference type="PRO" id="PR:Q9FJ41"/>
<dbReference type="Proteomes" id="UP000006548">
    <property type="component" value="Chromosome 5"/>
</dbReference>
<dbReference type="ExpressionAtlas" id="Q9FJ41">
    <property type="expression patterns" value="baseline and differential"/>
</dbReference>
<dbReference type="GO" id="GO:0005576">
    <property type="term" value="C:extracellular region"/>
    <property type="evidence" value="ECO:0007669"/>
    <property type="project" value="UniProtKB-SubCell"/>
</dbReference>
<dbReference type="GO" id="GO:0016788">
    <property type="term" value="F:hydrolase activity, acting on ester bonds"/>
    <property type="evidence" value="ECO:0007669"/>
    <property type="project" value="InterPro"/>
</dbReference>
<dbReference type="GO" id="GO:0016042">
    <property type="term" value="P:lipid catabolic process"/>
    <property type="evidence" value="ECO:0007669"/>
    <property type="project" value="UniProtKB-KW"/>
</dbReference>
<dbReference type="CDD" id="cd01837">
    <property type="entry name" value="SGNH_plant_lipase_like"/>
    <property type="match status" value="1"/>
</dbReference>
<dbReference type="Gene3D" id="3.40.50.1110">
    <property type="entry name" value="SGNH hydrolase"/>
    <property type="match status" value="1"/>
</dbReference>
<dbReference type="InterPro" id="IPR001087">
    <property type="entry name" value="GDSL"/>
</dbReference>
<dbReference type="InterPro" id="IPR050592">
    <property type="entry name" value="GDSL_lipolytic_enzyme"/>
</dbReference>
<dbReference type="InterPro" id="IPR036514">
    <property type="entry name" value="SGNH_hydro_sf"/>
</dbReference>
<dbReference type="InterPro" id="IPR035669">
    <property type="entry name" value="SGNH_plant_lipase-like"/>
</dbReference>
<dbReference type="PANTHER" id="PTHR45642">
    <property type="entry name" value="GDSL ESTERASE/LIPASE EXL3"/>
    <property type="match status" value="1"/>
</dbReference>
<dbReference type="PANTHER" id="PTHR45642:SF7">
    <property type="entry name" value="GDSL ESTERASE_LIPASE"/>
    <property type="match status" value="1"/>
</dbReference>
<dbReference type="Pfam" id="PF00657">
    <property type="entry name" value="Lipase_GDSL"/>
    <property type="match status" value="1"/>
</dbReference>
<dbReference type="SUPFAM" id="SSF52266">
    <property type="entry name" value="SGNH hydrolase"/>
    <property type="match status" value="1"/>
</dbReference>
<name>GDL85_ARATH</name>
<evidence type="ECO:0000250" key="1"/>
<evidence type="ECO:0000255" key="2"/>
<evidence type="ECO:0000305" key="3"/>